<dbReference type="EMBL" id="AB017901">
    <property type="protein sequence ID" value="BAA33467.1"/>
    <property type="molecule type" value="Genomic_DNA"/>
</dbReference>
<dbReference type="EMBL" id="AB017903">
    <property type="protein sequence ID" value="BAA33469.1"/>
    <property type="molecule type" value="Genomic_DNA"/>
</dbReference>
<dbReference type="EMBL" id="AB017904">
    <property type="protein sequence ID" value="BAA33470.1"/>
    <property type="molecule type" value="Genomic_DNA"/>
</dbReference>
<dbReference type="RefSeq" id="XP_064896005.1">
    <property type="nucleotide sequence ID" value="XM_065039933.1"/>
</dbReference>
<dbReference type="RefSeq" id="XP_064896007.1">
    <property type="nucleotide sequence ID" value="XM_065039935.1"/>
</dbReference>
<dbReference type="GeneID" id="135576195"/>
<dbReference type="GeneID" id="135576196"/>
<dbReference type="eggNOG" id="ENOG502TDEH">
    <property type="taxonomic scope" value="Eukaryota"/>
</dbReference>
<dbReference type="GO" id="GO:0005882">
    <property type="term" value="C:intermediate filament"/>
    <property type="evidence" value="ECO:0007669"/>
    <property type="project" value="UniProtKB-KW"/>
</dbReference>
<dbReference type="GO" id="GO:0005200">
    <property type="term" value="F:structural constituent of cytoskeleton"/>
    <property type="evidence" value="ECO:0007669"/>
    <property type="project" value="InterPro"/>
</dbReference>
<dbReference type="InterPro" id="IPR003461">
    <property type="entry name" value="Keratin"/>
</dbReference>
<dbReference type="PANTHER" id="PTHR31203">
    <property type="entry name" value="BETA-KERATIN-RELATED PROTEIN-RELATED"/>
    <property type="match status" value="1"/>
</dbReference>
<dbReference type="PANTHER" id="PTHR31203:SF1">
    <property type="entry name" value="BETA-KERATIN-RELATED PROTEIN-RELATED"/>
    <property type="match status" value="1"/>
</dbReference>
<dbReference type="Pfam" id="PF02422">
    <property type="entry name" value="Keratin"/>
    <property type="match status" value="1"/>
</dbReference>
<feature type="initiator methionine" description="Removed" evidence="1">
    <location>
        <position position="1"/>
    </location>
</feature>
<feature type="chain" id="PRO_0000097002" description="Feather keratin Cos1-1/Cos1-3/Cos2-1">
    <location>
        <begin position="2"/>
        <end position="101"/>
    </location>
</feature>
<feature type="modified residue" description="N-acetylserine" evidence="1">
    <location>
        <position position="2"/>
    </location>
</feature>
<sequence>MSCCNPCVPCQPCGPTPLANSCNEPCVRQCQNSTVVIEPSPVVVTLPGPILSSFPQNTVVGSSTSAAVGSILSCEGVPINSGGFDLSCITSRYCGNRCRPC</sequence>
<reference key="1">
    <citation type="journal article" date="2003" name="DNA Seq.">
        <title>Nucleotide sequences of pigeon feather keratin genes.</title>
        <authorList>
            <person name="Takahashi R."/>
            <person name="Akahane K."/>
            <person name="Arai K."/>
        </authorList>
    </citation>
    <scope>NUCLEOTIDE SEQUENCE [GENOMIC DNA]</scope>
</reference>
<protein>
    <recommendedName>
        <fullName>Feather keratin Cos1-1/Cos1-3/Cos2-1</fullName>
        <shortName>F-ker</shortName>
    </recommendedName>
</protein>
<accession>Q9PRI5</accession>
<organism>
    <name type="scientific">Columba livia</name>
    <name type="common">Rock dove</name>
    <dbReference type="NCBI Taxonomy" id="8932"/>
    <lineage>
        <taxon>Eukaryota</taxon>
        <taxon>Metazoa</taxon>
        <taxon>Chordata</taxon>
        <taxon>Craniata</taxon>
        <taxon>Vertebrata</taxon>
        <taxon>Euteleostomi</taxon>
        <taxon>Archelosauria</taxon>
        <taxon>Archosauria</taxon>
        <taxon>Dinosauria</taxon>
        <taxon>Saurischia</taxon>
        <taxon>Theropoda</taxon>
        <taxon>Coelurosauria</taxon>
        <taxon>Aves</taxon>
        <taxon>Neognathae</taxon>
        <taxon>Neoaves</taxon>
        <taxon>Columbimorphae</taxon>
        <taxon>Columbiformes</taxon>
        <taxon>Columbidae</taxon>
        <taxon>Columba</taxon>
    </lineage>
</organism>
<name>KRF1_COLLI</name>
<proteinExistence type="inferred from homology"/>
<comment type="subunit">
    <text>The avian keratins (F-ker, S-ker, C-ker and B-ker) are a complex mixture of very similar polypeptides.</text>
</comment>
<comment type="similarity">
    <text evidence="2">Belongs to the avian keratin family.</text>
</comment>
<evidence type="ECO:0000250" key="1"/>
<evidence type="ECO:0000305" key="2"/>
<keyword id="KW-0007">Acetylation</keyword>
<keyword id="KW-0416">Keratin</keyword>